<name>PURA_BURMS</name>
<sequence length="448" mass="48345">MSASAVNVTPGRNVVVVGTQWGDEGKGKIVDWLTDHAQGVVRFQGGHNAGHTLIIGGKKTILRLIPSGIMREGVACYIGNGVVLSPEALFKEIGELEEAGLSVRERLFISEATTLILPYHIAIDQAREARRGAGKIGTTGRGIGPAYEDKVGRRALRVQDLFDARTFADRLRENLDFHNFVLTQYLGGAAVDFQATLDTMLGYADRLKPMVTDVSRRLYEENHAGRNLLFEGAQGTLLDIDHGTYPFVTSSNCVAGAAAAGAGVGPQKLDYILGITKAYCTRVGSGPFPSELYDADNPSRQDQIGITLANVGKEFGSVTGRPRRTGWLDAAALRRSIQINGVSGLCMTKLDVLDGLDEVKLCVGYKIDGEDVDLLPRGAAEVARCEPVYETFGGWKESTVGIDSWDALPANARAYLTRVQEVAGVPIDMVSTGPDRDETILLRHPFKV</sequence>
<organism>
    <name type="scientific">Burkholderia mallei (strain SAVP1)</name>
    <dbReference type="NCBI Taxonomy" id="320388"/>
    <lineage>
        <taxon>Bacteria</taxon>
        <taxon>Pseudomonadati</taxon>
        <taxon>Pseudomonadota</taxon>
        <taxon>Betaproteobacteria</taxon>
        <taxon>Burkholderiales</taxon>
        <taxon>Burkholderiaceae</taxon>
        <taxon>Burkholderia</taxon>
        <taxon>pseudomallei group</taxon>
    </lineage>
</organism>
<accession>A1V4I9</accession>
<gene>
    <name evidence="1" type="primary">purA</name>
    <name type="ordered locus">BMASAVP1_A1823</name>
</gene>
<dbReference type="EC" id="6.3.4.4" evidence="1"/>
<dbReference type="EMBL" id="CP000526">
    <property type="protein sequence ID" value="ABM49907.1"/>
    <property type="molecule type" value="Genomic_DNA"/>
</dbReference>
<dbReference type="RefSeq" id="WP_004193462.1">
    <property type="nucleotide sequence ID" value="NC_008785.1"/>
</dbReference>
<dbReference type="SMR" id="A1V4I9"/>
<dbReference type="KEGG" id="bmv:BMASAVP1_A1823"/>
<dbReference type="HOGENOM" id="CLU_029848_0_0_4"/>
<dbReference type="UniPathway" id="UPA00075">
    <property type="reaction ID" value="UER00335"/>
</dbReference>
<dbReference type="GO" id="GO:0005737">
    <property type="term" value="C:cytoplasm"/>
    <property type="evidence" value="ECO:0007669"/>
    <property type="project" value="UniProtKB-SubCell"/>
</dbReference>
<dbReference type="GO" id="GO:0004019">
    <property type="term" value="F:adenylosuccinate synthase activity"/>
    <property type="evidence" value="ECO:0007669"/>
    <property type="project" value="UniProtKB-UniRule"/>
</dbReference>
<dbReference type="GO" id="GO:0005525">
    <property type="term" value="F:GTP binding"/>
    <property type="evidence" value="ECO:0007669"/>
    <property type="project" value="UniProtKB-UniRule"/>
</dbReference>
<dbReference type="GO" id="GO:0000287">
    <property type="term" value="F:magnesium ion binding"/>
    <property type="evidence" value="ECO:0007669"/>
    <property type="project" value="UniProtKB-UniRule"/>
</dbReference>
<dbReference type="GO" id="GO:0044208">
    <property type="term" value="P:'de novo' AMP biosynthetic process"/>
    <property type="evidence" value="ECO:0007669"/>
    <property type="project" value="UniProtKB-UniRule"/>
</dbReference>
<dbReference type="GO" id="GO:0046040">
    <property type="term" value="P:IMP metabolic process"/>
    <property type="evidence" value="ECO:0007669"/>
    <property type="project" value="TreeGrafter"/>
</dbReference>
<dbReference type="CDD" id="cd03108">
    <property type="entry name" value="AdSS"/>
    <property type="match status" value="1"/>
</dbReference>
<dbReference type="FunFam" id="1.10.300.10:FF:000001">
    <property type="entry name" value="Adenylosuccinate synthetase"/>
    <property type="match status" value="1"/>
</dbReference>
<dbReference type="FunFam" id="3.90.170.10:FF:000001">
    <property type="entry name" value="Adenylosuccinate synthetase"/>
    <property type="match status" value="1"/>
</dbReference>
<dbReference type="Gene3D" id="3.40.440.10">
    <property type="entry name" value="Adenylosuccinate Synthetase, subunit A, domain 1"/>
    <property type="match status" value="1"/>
</dbReference>
<dbReference type="Gene3D" id="1.10.300.10">
    <property type="entry name" value="Adenylosuccinate Synthetase, subunit A, domain 2"/>
    <property type="match status" value="1"/>
</dbReference>
<dbReference type="Gene3D" id="3.90.170.10">
    <property type="entry name" value="Adenylosuccinate Synthetase, subunit A, domain 3"/>
    <property type="match status" value="1"/>
</dbReference>
<dbReference type="HAMAP" id="MF_00011">
    <property type="entry name" value="Adenylosucc_synth"/>
    <property type="match status" value="1"/>
</dbReference>
<dbReference type="InterPro" id="IPR018220">
    <property type="entry name" value="Adenylosuccin_syn_GTP-bd"/>
</dbReference>
<dbReference type="InterPro" id="IPR033128">
    <property type="entry name" value="Adenylosuccin_syn_Lys_AS"/>
</dbReference>
<dbReference type="InterPro" id="IPR042109">
    <property type="entry name" value="Adenylosuccinate_synth_dom1"/>
</dbReference>
<dbReference type="InterPro" id="IPR042110">
    <property type="entry name" value="Adenylosuccinate_synth_dom2"/>
</dbReference>
<dbReference type="InterPro" id="IPR042111">
    <property type="entry name" value="Adenylosuccinate_synth_dom3"/>
</dbReference>
<dbReference type="InterPro" id="IPR001114">
    <property type="entry name" value="Adenylosuccinate_synthetase"/>
</dbReference>
<dbReference type="InterPro" id="IPR027417">
    <property type="entry name" value="P-loop_NTPase"/>
</dbReference>
<dbReference type="NCBIfam" id="NF002223">
    <property type="entry name" value="PRK01117.1"/>
    <property type="match status" value="1"/>
</dbReference>
<dbReference type="NCBIfam" id="TIGR00184">
    <property type="entry name" value="purA"/>
    <property type="match status" value="1"/>
</dbReference>
<dbReference type="PANTHER" id="PTHR11846">
    <property type="entry name" value="ADENYLOSUCCINATE SYNTHETASE"/>
    <property type="match status" value="1"/>
</dbReference>
<dbReference type="PANTHER" id="PTHR11846:SF0">
    <property type="entry name" value="ADENYLOSUCCINATE SYNTHETASE"/>
    <property type="match status" value="1"/>
</dbReference>
<dbReference type="Pfam" id="PF00709">
    <property type="entry name" value="Adenylsucc_synt"/>
    <property type="match status" value="1"/>
</dbReference>
<dbReference type="SMART" id="SM00788">
    <property type="entry name" value="Adenylsucc_synt"/>
    <property type="match status" value="1"/>
</dbReference>
<dbReference type="SUPFAM" id="SSF52540">
    <property type="entry name" value="P-loop containing nucleoside triphosphate hydrolases"/>
    <property type="match status" value="1"/>
</dbReference>
<dbReference type="PROSITE" id="PS01266">
    <property type="entry name" value="ADENYLOSUCCIN_SYN_1"/>
    <property type="match status" value="1"/>
</dbReference>
<dbReference type="PROSITE" id="PS00513">
    <property type="entry name" value="ADENYLOSUCCIN_SYN_2"/>
    <property type="match status" value="1"/>
</dbReference>
<evidence type="ECO:0000255" key="1">
    <source>
        <dbReference type="HAMAP-Rule" id="MF_00011"/>
    </source>
</evidence>
<keyword id="KW-0963">Cytoplasm</keyword>
<keyword id="KW-0342">GTP-binding</keyword>
<keyword id="KW-0436">Ligase</keyword>
<keyword id="KW-0460">Magnesium</keyword>
<keyword id="KW-0479">Metal-binding</keyword>
<keyword id="KW-0547">Nucleotide-binding</keyword>
<keyword id="KW-0658">Purine biosynthesis</keyword>
<reference key="1">
    <citation type="journal article" date="2010" name="Genome Biol. Evol.">
        <title>Continuing evolution of Burkholderia mallei through genome reduction and large-scale rearrangements.</title>
        <authorList>
            <person name="Losada L."/>
            <person name="Ronning C.M."/>
            <person name="DeShazer D."/>
            <person name="Woods D."/>
            <person name="Fedorova N."/>
            <person name="Kim H.S."/>
            <person name="Shabalina S.A."/>
            <person name="Pearson T.R."/>
            <person name="Brinkac L."/>
            <person name="Tan P."/>
            <person name="Nandi T."/>
            <person name="Crabtree J."/>
            <person name="Badger J."/>
            <person name="Beckstrom-Sternberg S."/>
            <person name="Saqib M."/>
            <person name="Schutzer S.E."/>
            <person name="Keim P."/>
            <person name="Nierman W.C."/>
        </authorList>
    </citation>
    <scope>NUCLEOTIDE SEQUENCE [LARGE SCALE GENOMIC DNA]</scope>
    <source>
        <strain>SAVP1</strain>
    </source>
</reference>
<feature type="chain" id="PRO_1000000788" description="Adenylosuccinate synthetase">
    <location>
        <begin position="1"/>
        <end position="448"/>
    </location>
</feature>
<feature type="active site" description="Proton acceptor" evidence="1">
    <location>
        <position position="23"/>
    </location>
</feature>
<feature type="active site" description="Proton donor" evidence="1">
    <location>
        <position position="51"/>
    </location>
</feature>
<feature type="binding site" evidence="1">
    <location>
        <begin position="22"/>
        <end position="28"/>
    </location>
    <ligand>
        <name>GTP</name>
        <dbReference type="ChEBI" id="CHEBI:37565"/>
    </ligand>
</feature>
<feature type="binding site" description="in other chain" evidence="1">
    <location>
        <begin position="23"/>
        <end position="26"/>
    </location>
    <ligand>
        <name>IMP</name>
        <dbReference type="ChEBI" id="CHEBI:58053"/>
        <note>ligand shared between dimeric partners</note>
    </ligand>
</feature>
<feature type="binding site" evidence="1">
    <location>
        <position position="23"/>
    </location>
    <ligand>
        <name>Mg(2+)</name>
        <dbReference type="ChEBI" id="CHEBI:18420"/>
    </ligand>
</feature>
<feature type="binding site" description="in other chain" evidence="1">
    <location>
        <begin position="48"/>
        <end position="51"/>
    </location>
    <ligand>
        <name>IMP</name>
        <dbReference type="ChEBI" id="CHEBI:58053"/>
        <note>ligand shared between dimeric partners</note>
    </ligand>
</feature>
<feature type="binding site" evidence="1">
    <location>
        <begin position="50"/>
        <end position="52"/>
    </location>
    <ligand>
        <name>GTP</name>
        <dbReference type="ChEBI" id="CHEBI:37565"/>
    </ligand>
</feature>
<feature type="binding site" evidence="1">
    <location>
        <position position="50"/>
    </location>
    <ligand>
        <name>Mg(2+)</name>
        <dbReference type="ChEBI" id="CHEBI:18420"/>
    </ligand>
</feature>
<feature type="binding site" description="in other chain" evidence="1">
    <location>
        <position position="139"/>
    </location>
    <ligand>
        <name>IMP</name>
        <dbReference type="ChEBI" id="CHEBI:58053"/>
        <note>ligand shared between dimeric partners</note>
    </ligand>
</feature>
<feature type="binding site" evidence="1">
    <location>
        <position position="153"/>
    </location>
    <ligand>
        <name>IMP</name>
        <dbReference type="ChEBI" id="CHEBI:58053"/>
        <note>ligand shared between dimeric partners</note>
    </ligand>
</feature>
<feature type="binding site" description="in other chain" evidence="1">
    <location>
        <position position="234"/>
    </location>
    <ligand>
        <name>IMP</name>
        <dbReference type="ChEBI" id="CHEBI:58053"/>
        <note>ligand shared between dimeric partners</note>
    </ligand>
</feature>
<feature type="binding site" description="in other chain" evidence="1">
    <location>
        <position position="249"/>
    </location>
    <ligand>
        <name>IMP</name>
        <dbReference type="ChEBI" id="CHEBI:58053"/>
        <note>ligand shared between dimeric partners</note>
    </ligand>
</feature>
<feature type="binding site" evidence="1">
    <location>
        <begin position="317"/>
        <end position="323"/>
    </location>
    <ligand>
        <name>substrate</name>
    </ligand>
</feature>
<feature type="binding site" description="in other chain" evidence="1">
    <location>
        <position position="321"/>
    </location>
    <ligand>
        <name>IMP</name>
        <dbReference type="ChEBI" id="CHEBI:58053"/>
        <note>ligand shared between dimeric partners</note>
    </ligand>
</feature>
<feature type="binding site" evidence="1">
    <location>
        <position position="323"/>
    </location>
    <ligand>
        <name>GTP</name>
        <dbReference type="ChEBI" id="CHEBI:37565"/>
    </ligand>
</feature>
<feature type="binding site" evidence="1">
    <location>
        <begin position="349"/>
        <end position="351"/>
    </location>
    <ligand>
        <name>GTP</name>
        <dbReference type="ChEBI" id="CHEBI:37565"/>
    </ligand>
</feature>
<feature type="binding site" evidence="1">
    <location>
        <begin position="431"/>
        <end position="433"/>
    </location>
    <ligand>
        <name>GTP</name>
        <dbReference type="ChEBI" id="CHEBI:37565"/>
    </ligand>
</feature>
<protein>
    <recommendedName>
        <fullName evidence="1">Adenylosuccinate synthetase</fullName>
        <shortName evidence="1">AMPSase</shortName>
        <shortName evidence="1">AdSS</shortName>
        <ecNumber evidence="1">6.3.4.4</ecNumber>
    </recommendedName>
    <alternativeName>
        <fullName evidence="1">IMP--aspartate ligase</fullName>
    </alternativeName>
</protein>
<comment type="function">
    <text evidence="1">Plays an important role in the de novo pathway of purine nucleotide biosynthesis. Catalyzes the first committed step in the biosynthesis of AMP from IMP.</text>
</comment>
<comment type="catalytic activity">
    <reaction evidence="1">
        <text>IMP + L-aspartate + GTP = N(6)-(1,2-dicarboxyethyl)-AMP + GDP + phosphate + 2 H(+)</text>
        <dbReference type="Rhea" id="RHEA:15753"/>
        <dbReference type="ChEBI" id="CHEBI:15378"/>
        <dbReference type="ChEBI" id="CHEBI:29991"/>
        <dbReference type="ChEBI" id="CHEBI:37565"/>
        <dbReference type="ChEBI" id="CHEBI:43474"/>
        <dbReference type="ChEBI" id="CHEBI:57567"/>
        <dbReference type="ChEBI" id="CHEBI:58053"/>
        <dbReference type="ChEBI" id="CHEBI:58189"/>
        <dbReference type="EC" id="6.3.4.4"/>
    </reaction>
</comment>
<comment type="cofactor">
    <cofactor evidence="1">
        <name>Mg(2+)</name>
        <dbReference type="ChEBI" id="CHEBI:18420"/>
    </cofactor>
    <text evidence="1">Binds 1 Mg(2+) ion per subunit.</text>
</comment>
<comment type="pathway">
    <text evidence="1">Purine metabolism; AMP biosynthesis via de novo pathway; AMP from IMP: step 1/2.</text>
</comment>
<comment type="subunit">
    <text evidence="1">Homodimer.</text>
</comment>
<comment type="subcellular location">
    <subcellularLocation>
        <location evidence="1">Cytoplasm</location>
    </subcellularLocation>
</comment>
<comment type="similarity">
    <text evidence="1">Belongs to the adenylosuccinate synthetase family.</text>
</comment>
<proteinExistence type="inferred from homology"/>